<sequence>MGIRKYKPTTPGRRGSSVADFTEITRSTPEKSLVRPLPKKGGRNNTGKITTRHKGGGHKRQYRLIDFRRHDKDGVDARVAEIEYDPNRTARIALLHYVDGTKRYIIAPNKLSQGDFVEAGANADIKPGNNLPLRNIPVGTVIHAVELRPGGGAKMGRSAGASIQLVAKEGRFAQLRLPSGEIRNVDVRCRATVGEVGNAEQSNINWGKAGRMRWKGVRPTVRGVAMNPVDHPHGGGEGKTSGGRHPVNPNGKREGRTRRPNKESDKLIVRRRRTGKNKR</sequence>
<dbReference type="EMBL" id="CP000454">
    <property type="protein sequence ID" value="ABK04351.1"/>
    <property type="molecule type" value="Genomic_DNA"/>
</dbReference>
<dbReference type="RefSeq" id="WP_011692806.1">
    <property type="nucleotide sequence ID" value="NC_008541.1"/>
</dbReference>
<dbReference type="SMR" id="A0JZ81"/>
<dbReference type="STRING" id="290399.Arth_2972"/>
<dbReference type="KEGG" id="art:Arth_2972"/>
<dbReference type="eggNOG" id="COG0090">
    <property type="taxonomic scope" value="Bacteria"/>
</dbReference>
<dbReference type="HOGENOM" id="CLU_036235_2_1_11"/>
<dbReference type="OrthoDB" id="9778722at2"/>
<dbReference type="Proteomes" id="UP000000754">
    <property type="component" value="Chromosome"/>
</dbReference>
<dbReference type="GO" id="GO:0015934">
    <property type="term" value="C:large ribosomal subunit"/>
    <property type="evidence" value="ECO:0007669"/>
    <property type="project" value="InterPro"/>
</dbReference>
<dbReference type="GO" id="GO:0019843">
    <property type="term" value="F:rRNA binding"/>
    <property type="evidence" value="ECO:0007669"/>
    <property type="project" value="UniProtKB-UniRule"/>
</dbReference>
<dbReference type="GO" id="GO:0003735">
    <property type="term" value="F:structural constituent of ribosome"/>
    <property type="evidence" value="ECO:0007669"/>
    <property type="project" value="InterPro"/>
</dbReference>
<dbReference type="GO" id="GO:0016740">
    <property type="term" value="F:transferase activity"/>
    <property type="evidence" value="ECO:0007669"/>
    <property type="project" value="InterPro"/>
</dbReference>
<dbReference type="GO" id="GO:0002181">
    <property type="term" value="P:cytoplasmic translation"/>
    <property type="evidence" value="ECO:0007669"/>
    <property type="project" value="TreeGrafter"/>
</dbReference>
<dbReference type="FunFam" id="2.30.30.30:FF:000001">
    <property type="entry name" value="50S ribosomal protein L2"/>
    <property type="match status" value="1"/>
</dbReference>
<dbReference type="FunFam" id="2.40.50.140:FF:000003">
    <property type="entry name" value="50S ribosomal protein L2"/>
    <property type="match status" value="1"/>
</dbReference>
<dbReference type="FunFam" id="4.10.950.10:FF:000001">
    <property type="entry name" value="50S ribosomal protein L2"/>
    <property type="match status" value="1"/>
</dbReference>
<dbReference type="Gene3D" id="2.30.30.30">
    <property type="match status" value="1"/>
</dbReference>
<dbReference type="Gene3D" id="2.40.50.140">
    <property type="entry name" value="Nucleic acid-binding proteins"/>
    <property type="match status" value="1"/>
</dbReference>
<dbReference type="Gene3D" id="4.10.950.10">
    <property type="entry name" value="Ribosomal protein L2, domain 3"/>
    <property type="match status" value="1"/>
</dbReference>
<dbReference type="HAMAP" id="MF_01320_B">
    <property type="entry name" value="Ribosomal_uL2_B"/>
    <property type="match status" value="1"/>
</dbReference>
<dbReference type="InterPro" id="IPR012340">
    <property type="entry name" value="NA-bd_OB-fold"/>
</dbReference>
<dbReference type="InterPro" id="IPR014722">
    <property type="entry name" value="Rib_uL2_dom2"/>
</dbReference>
<dbReference type="InterPro" id="IPR002171">
    <property type="entry name" value="Ribosomal_uL2"/>
</dbReference>
<dbReference type="InterPro" id="IPR005880">
    <property type="entry name" value="Ribosomal_uL2_bac/org-type"/>
</dbReference>
<dbReference type="InterPro" id="IPR022669">
    <property type="entry name" value="Ribosomal_uL2_C"/>
</dbReference>
<dbReference type="InterPro" id="IPR022671">
    <property type="entry name" value="Ribosomal_uL2_CS"/>
</dbReference>
<dbReference type="InterPro" id="IPR014726">
    <property type="entry name" value="Ribosomal_uL2_dom3"/>
</dbReference>
<dbReference type="InterPro" id="IPR022666">
    <property type="entry name" value="Ribosomal_uL2_RNA-bd_dom"/>
</dbReference>
<dbReference type="InterPro" id="IPR008991">
    <property type="entry name" value="Translation_prot_SH3-like_sf"/>
</dbReference>
<dbReference type="NCBIfam" id="TIGR01171">
    <property type="entry name" value="rplB_bact"/>
    <property type="match status" value="1"/>
</dbReference>
<dbReference type="PANTHER" id="PTHR13691:SF5">
    <property type="entry name" value="LARGE RIBOSOMAL SUBUNIT PROTEIN UL2M"/>
    <property type="match status" value="1"/>
</dbReference>
<dbReference type="PANTHER" id="PTHR13691">
    <property type="entry name" value="RIBOSOMAL PROTEIN L2"/>
    <property type="match status" value="1"/>
</dbReference>
<dbReference type="Pfam" id="PF00181">
    <property type="entry name" value="Ribosomal_L2"/>
    <property type="match status" value="1"/>
</dbReference>
<dbReference type="Pfam" id="PF03947">
    <property type="entry name" value="Ribosomal_L2_C"/>
    <property type="match status" value="1"/>
</dbReference>
<dbReference type="PIRSF" id="PIRSF002158">
    <property type="entry name" value="Ribosomal_L2"/>
    <property type="match status" value="1"/>
</dbReference>
<dbReference type="SMART" id="SM01383">
    <property type="entry name" value="Ribosomal_L2"/>
    <property type="match status" value="1"/>
</dbReference>
<dbReference type="SMART" id="SM01382">
    <property type="entry name" value="Ribosomal_L2_C"/>
    <property type="match status" value="1"/>
</dbReference>
<dbReference type="SUPFAM" id="SSF50249">
    <property type="entry name" value="Nucleic acid-binding proteins"/>
    <property type="match status" value="1"/>
</dbReference>
<dbReference type="SUPFAM" id="SSF50104">
    <property type="entry name" value="Translation proteins SH3-like domain"/>
    <property type="match status" value="1"/>
</dbReference>
<dbReference type="PROSITE" id="PS00467">
    <property type="entry name" value="RIBOSOMAL_L2"/>
    <property type="match status" value="1"/>
</dbReference>
<proteinExistence type="inferred from homology"/>
<gene>
    <name evidence="1" type="primary">rplB</name>
    <name type="ordered locus">Arth_2972</name>
</gene>
<comment type="function">
    <text evidence="1">One of the primary rRNA binding proteins. Required for association of the 30S and 50S subunits to form the 70S ribosome, for tRNA binding and peptide bond formation. It has been suggested to have peptidyltransferase activity; this is somewhat controversial. Makes several contacts with the 16S rRNA in the 70S ribosome.</text>
</comment>
<comment type="subunit">
    <text evidence="1">Part of the 50S ribosomal subunit. Forms a bridge to the 30S subunit in the 70S ribosome.</text>
</comment>
<comment type="similarity">
    <text evidence="1">Belongs to the universal ribosomal protein uL2 family.</text>
</comment>
<organism>
    <name type="scientific">Arthrobacter sp. (strain FB24)</name>
    <dbReference type="NCBI Taxonomy" id="290399"/>
    <lineage>
        <taxon>Bacteria</taxon>
        <taxon>Bacillati</taxon>
        <taxon>Actinomycetota</taxon>
        <taxon>Actinomycetes</taxon>
        <taxon>Micrococcales</taxon>
        <taxon>Micrococcaceae</taxon>
        <taxon>Arthrobacter</taxon>
    </lineage>
</organism>
<name>RL2_ARTS2</name>
<feature type="chain" id="PRO_0000309868" description="Large ribosomal subunit protein uL2">
    <location>
        <begin position="1"/>
        <end position="279"/>
    </location>
</feature>
<feature type="region of interest" description="Disordered" evidence="2">
    <location>
        <begin position="1"/>
        <end position="59"/>
    </location>
</feature>
<feature type="region of interest" description="Disordered" evidence="2">
    <location>
        <begin position="224"/>
        <end position="279"/>
    </location>
</feature>
<feature type="compositionally biased region" description="Basic residues" evidence="2">
    <location>
        <begin position="50"/>
        <end position="59"/>
    </location>
</feature>
<feature type="compositionally biased region" description="Basic residues" evidence="2">
    <location>
        <begin position="269"/>
        <end position="279"/>
    </location>
</feature>
<protein>
    <recommendedName>
        <fullName evidence="1">Large ribosomal subunit protein uL2</fullName>
    </recommendedName>
    <alternativeName>
        <fullName evidence="3">50S ribosomal protein L2</fullName>
    </alternativeName>
</protein>
<keyword id="KW-1185">Reference proteome</keyword>
<keyword id="KW-0687">Ribonucleoprotein</keyword>
<keyword id="KW-0689">Ribosomal protein</keyword>
<keyword id="KW-0694">RNA-binding</keyword>
<keyword id="KW-0699">rRNA-binding</keyword>
<reference key="1">
    <citation type="journal article" date="2013" name="Stand. Genomic Sci.">
        <title>Complete genome sequence of Arthrobacter sp. strain FB24.</title>
        <authorList>
            <person name="Nakatsu C.H."/>
            <person name="Barabote R."/>
            <person name="Thompson S."/>
            <person name="Bruce D."/>
            <person name="Detter C."/>
            <person name="Brettin T."/>
            <person name="Han C."/>
            <person name="Beasley F."/>
            <person name="Chen W."/>
            <person name="Konopka A."/>
            <person name="Xie G."/>
        </authorList>
    </citation>
    <scope>NUCLEOTIDE SEQUENCE [LARGE SCALE GENOMIC DNA]</scope>
    <source>
        <strain>FB24</strain>
    </source>
</reference>
<accession>A0JZ81</accession>
<evidence type="ECO:0000255" key="1">
    <source>
        <dbReference type="HAMAP-Rule" id="MF_01320"/>
    </source>
</evidence>
<evidence type="ECO:0000256" key="2">
    <source>
        <dbReference type="SAM" id="MobiDB-lite"/>
    </source>
</evidence>
<evidence type="ECO:0000305" key="3"/>